<keyword id="KW-0963">Cytoplasm</keyword>
<keyword id="KW-1185">Reference proteome</keyword>
<keyword id="KW-0688">Ribosomal frameshifting</keyword>
<keyword id="KW-0694">RNA-binding</keyword>
<keyword id="KW-0814">Transposable element</keyword>
<dbReference type="EMBL" id="Z71560">
    <property type="protein sequence ID" value="CAA96197.1"/>
    <property type="molecule type" value="Genomic_DNA"/>
</dbReference>
<dbReference type="EMBL" id="Z71561">
    <property type="protein sequence ID" value="CAA96202.1"/>
    <property type="molecule type" value="Genomic_DNA"/>
</dbReference>
<dbReference type="EMBL" id="BK006947">
    <property type="protein sequence ID" value="DAA10275.1"/>
    <property type="molecule type" value="Genomic_DNA"/>
</dbReference>
<dbReference type="PIR" id="S69970">
    <property type="entry name" value="S69970"/>
</dbReference>
<dbReference type="RefSeq" id="NP_058179.1">
    <molecule id="Q12391-1"/>
    <property type="nucleotide sequence ID" value="NM_001184414.1"/>
</dbReference>
<dbReference type="SMR" id="Q12391"/>
<dbReference type="BioGRID" id="35554">
    <property type="interactions" value="19"/>
</dbReference>
<dbReference type="FunCoup" id="Q12391">
    <property type="interactions" value="61"/>
</dbReference>
<dbReference type="IntAct" id="Q12391">
    <property type="interactions" value="1"/>
</dbReference>
<dbReference type="GlyGen" id="Q12391">
    <property type="glycosylation" value="2 sites"/>
</dbReference>
<dbReference type="iPTMnet" id="Q12391"/>
<dbReference type="PaxDb" id="4932-YNL284C-A"/>
<dbReference type="PeptideAtlas" id="Q12391"/>
<dbReference type="GeneID" id="855434"/>
<dbReference type="KEGG" id="sce:YNL284C-A"/>
<dbReference type="AGR" id="SGD:S000007386"/>
<dbReference type="SGD" id="S000007386">
    <property type="gene designation" value="YNL284C-A"/>
</dbReference>
<dbReference type="VEuPathDB" id="FungiDB:YNL284C-A"/>
<dbReference type="eggNOG" id="KOG0017">
    <property type="taxonomic scope" value="Eukaryota"/>
</dbReference>
<dbReference type="HOGENOM" id="CLU_045291_1_0_1"/>
<dbReference type="InParanoid" id="Q12391"/>
<dbReference type="OrthoDB" id="5423336at2759"/>
<dbReference type="Proteomes" id="UP000002311">
    <property type="component" value="Chromosome XIV"/>
</dbReference>
<dbReference type="RNAct" id="Q12391">
    <property type="molecule type" value="protein"/>
</dbReference>
<dbReference type="GO" id="GO:0005737">
    <property type="term" value="C:cytoplasm"/>
    <property type="evidence" value="ECO:0007669"/>
    <property type="project" value="UniProtKB-SubCell"/>
</dbReference>
<dbReference type="GO" id="GO:0003723">
    <property type="term" value="F:RNA binding"/>
    <property type="evidence" value="ECO:0007669"/>
    <property type="project" value="UniProtKB-KW"/>
</dbReference>
<dbReference type="GO" id="GO:0075523">
    <property type="term" value="P:viral translational frameshifting"/>
    <property type="evidence" value="ECO:0007669"/>
    <property type="project" value="UniProtKB-KW"/>
</dbReference>
<dbReference type="InterPro" id="IPR015820">
    <property type="entry name" value="TYA"/>
</dbReference>
<dbReference type="Pfam" id="PF01021">
    <property type="entry name" value="TYA"/>
    <property type="match status" value="1"/>
</dbReference>
<comment type="function">
    <text evidence="1">Capsid protein (CA) is the structural component of the virus-like particle (VLP), forming the shell that encapsulates the retrotransposons dimeric RNA genome. The particles are assembled from trimer-clustered units and there are holes in the capsid shells that allow for the diffusion of macromolecules. CA also has nucleocapsid-like chaperone activity, promoting primer tRNA(i)-Met annealing to the multipartite primer-binding site (PBS), dimerization of Ty1 RNA and initiation of reverse transcription (By similarity).</text>
</comment>
<comment type="subunit">
    <text evidence="1">Homotrimer.</text>
</comment>
<comment type="subcellular location">
    <subcellularLocation>
        <location evidence="1">Cytoplasm</location>
    </subcellularLocation>
</comment>
<comment type="alternative products">
    <event type="ribosomal frameshifting"/>
    <isoform>
        <id>Q12391-1</id>
        <name>Transposon Ty1-NL1 Gag polyprotein</name>
        <sequence type="displayed"/>
    </isoform>
    <isoform>
        <id>Q12112-1</id>
        <name>Transposon Ty1-NL1 Gag-Pol polyprotein</name>
        <sequence type="external"/>
    </isoform>
    <text evidence="1">The Gag-Pol polyprotein is generated by a +1 ribosomal frameshift. The ratio of Gag:Gag-Pol varies between 20:1 and 5:1 (By similarity).</text>
</comment>
<comment type="induction">
    <text evidence="3">Ty1-NL1 is a weakly expressed element. Induced under amino acid starvation conditions by GCN4.</text>
</comment>
<comment type="domain">
    <text evidence="1">The C-terminal RNA-binding region of CA is sufficient for all its nucleocapsid-like chaperone activities.</text>
</comment>
<comment type="miscellaneous">
    <text>Retrotransposons are mobile genetic entities that are able to replicate via an RNA intermediate and a reverse transcription step. In contrast to retroviruses, retrotransposons are non-infectious, lack an envelope and remain intracellular. Ty1 retrotransposons belong to the copia elements (pseudoviridae).</text>
</comment>
<comment type="miscellaneous">
    <molecule>Isoform Transposon Ty1-NL1 Gag polyprotein</molecule>
    <text>Produced by conventional translation.</text>
</comment>
<accession>Q12391</accession>
<accession>D6W0Q9</accession>
<proteinExistence type="evidence at transcript level"/>
<evidence type="ECO:0000250" key="1"/>
<evidence type="ECO:0000256" key="2">
    <source>
        <dbReference type="SAM" id="MobiDB-lite"/>
    </source>
</evidence>
<evidence type="ECO:0000269" key="3">
    <source>
    </source>
</evidence>
<reference key="1">
    <citation type="journal article" date="1997" name="Nature">
        <title>The nucleotide sequence of Saccharomyces cerevisiae chromosome XIV and its evolutionary implications.</title>
        <authorList>
            <person name="Philippsen P."/>
            <person name="Kleine K."/>
            <person name="Poehlmann R."/>
            <person name="Duesterhoeft A."/>
            <person name="Hamberg K."/>
            <person name="Hegemann J.H."/>
            <person name="Obermaier B."/>
            <person name="Urrestarazu L.A."/>
            <person name="Aert R."/>
            <person name="Albermann K."/>
            <person name="Altmann R."/>
            <person name="Andre B."/>
            <person name="Baladron V."/>
            <person name="Ballesta J.P.G."/>
            <person name="Becam A.-M."/>
            <person name="Beinhauer J.D."/>
            <person name="Boskovic J."/>
            <person name="Buitrago M.J."/>
            <person name="Bussereau F."/>
            <person name="Coster F."/>
            <person name="Crouzet M."/>
            <person name="D'Angelo M."/>
            <person name="Dal Pero F."/>
            <person name="De Antoni A."/>
            <person name="del Rey F."/>
            <person name="Doignon F."/>
            <person name="Domdey H."/>
            <person name="Dubois E."/>
            <person name="Fiedler T.A."/>
            <person name="Fleig U."/>
            <person name="Floeth M."/>
            <person name="Fritz C."/>
            <person name="Gaillardin C."/>
            <person name="Garcia-Cantalejo J.M."/>
            <person name="Glansdorff N."/>
            <person name="Goffeau A."/>
            <person name="Gueldener U."/>
            <person name="Herbert C.J."/>
            <person name="Heumann K."/>
            <person name="Heuss-Neitzel D."/>
            <person name="Hilbert H."/>
            <person name="Hinni K."/>
            <person name="Iraqui Houssaini I."/>
            <person name="Jacquet M."/>
            <person name="Jimenez A."/>
            <person name="Jonniaux J.-L."/>
            <person name="Karpfinger-Hartl L."/>
            <person name="Lanfranchi G."/>
            <person name="Lepingle A."/>
            <person name="Levesque H."/>
            <person name="Lyck R."/>
            <person name="Maftahi M."/>
            <person name="Mallet L."/>
            <person name="Maurer C.T.C."/>
            <person name="Messenguy F."/>
            <person name="Mewes H.-W."/>
            <person name="Moestl D."/>
            <person name="Nasr F."/>
            <person name="Nicaud J.-M."/>
            <person name="Niedenthal R.K."/>
            <person name="Pandolfo D."/>
            <person name="Pierard A."/>
            <person name="Piravandi E."/>
            <person name="Planta R.J."/>
            <person name="Pohl T.M."/>
            <person name="Purnelle B."/>
            <person name="Rebischung C."/>
            <person name="Remacha M.A."/>
            <person name="Revuelta J.L."/>
            <person name="Rinke M."/>
            <person name="Saiz J.E."/>
            <person name="Sartorello F."/>
            <person name="Scherens B."/>
            <person name="Sen-Gupta M."/>
            <person name="Soler-Mira A."/>
            <person name="Urbanus J.H.M."/>
            <person name="Valle G."/>
            <person name="Van Dyck L."/>
            <person name="Verhasselt P."/>
            <person name="Vierendeels F."/>
            <person name="Vissers S."/>
            <person name="Voet M."/>
            <person name="Volckaert G."/>
            <person name="Wach A."/>
            <person name="Wambutt R."/>
            <person name="Wedler H."/>
            <person name="Zollner A."/>
            <person name="Hani J."/>
        </authorList>
    </citation>
    <scope>NUCLEOTIDE SEQUENCE [LARGE SCALE GENOMIC DNA]</scope>
    <source>
        <strain>ATCC 204508 / S288c</strain>
    </source>
</reference>
<reference key="2">
    <citation type="journal article" date="2014" name="G3 (Bethesda)">
        <title>The reference genome sequence of Saccharomyces cerevisiae: Then and now.</title>
        <authorList>
            <person name="Engel S.R."/>
            <person name="Dietrich F.S."/>
            <person name="Fisk D.G."/>
            <person name="Binkley G."/>
            <person name="Balakrishnan R."/>
            <person name="Costanzo M.C."/>
            <person name="Dwight S.S."/>
            <person name="Hitz B.C."/>
            <person name="Karra K."/>
            <person name="Nash R.S."/>
            <person name="Weng S."/>
            <person name="Wong E.D."/>
            <person name="Lloyd P."/>
            <person name="Skrzypek M.S."/>
            <person name="Miyasato S.R."/>
            <person name="Simison M."/>
            <person name="Cherry J.M."/>
        </authorList>
    </citation>
    <scope>GENOME REANNOTATION</scope>
    <source>
        <strain>ATCC 204508 / S288c</strain>
    </source>
</reference>
<reference key="3">
    <citation type="journal article" date="1998" name="Genome Res.">
        <title>Transposable elements and genome organization: a comprehensive survey of retrotransposons revealed by the complete Saccharomyces cerevisiae genome sequence.</title>
        <authorList>
            <person name="Kim J.M."/>
            <person name="Vanguri S."/>
            <person name="Boeke J.D."/>
            <person name="Gabriel A."/>
            <person name="Voytas D.F."/>
        </authorList>
    </citation>
    <scope>NOMENCLATURE</scope>
</reference>
<reference key="4">
    <citation type="journal article" date="2002" name="Mol. Cell. Biol.">
        <title>Differential effects of chromatin and Gcn4 on the 50-fold range of expression among individual yeast Ty1 retrotransposons.</title>
        <authorList>
            <person name="Morillon A."/>
            <person name="Benard L."/>
            <person name="Springer M."/>
            <person name="Lesage P."/>
        </authorList>
    </citation>
    <scope>INDUCTION</scope>
</reference>
<reference key="5">
    <citation type="journal article" date="2005" name="Cytogenet. Genome Res.">
        <title>Happy together: the life and times of Ty retrotransposons and their hosts.</title>
        <authorList>
            <person name="Lesage P."/>
            <person name="Todeschini A.L."/>
        </authorList>
    </citation>
    <scope>REVIEW</scope>
</reference>
<feature type="chain" id="PRO_0000279142" description="Transposon Ty1-NL1 Gag polyprotein">
    <location>
        <begin position="1"/>
        <end position="440"/>
    </location>
</feature>
<feature type="chain" id="PRO_0000279143" description="Capsid protein" evidence="1">
    <location>
        <begin position="1"/>
        <end position="401"/>
    </location>
</feature>
<feature type="peptide" id="PRO_0000279144" description="Gag-p4" evidence="1">
    <location>
        <begin position="402"/>
        <end position="440"/>
    </location>
</feature>
<feature type="region of interest" description="Disordered" evidence="2">
    <location>
        <begin position="1"/>
        <end position="86"/>
    </location>
</feature>
<feature type="region of interest" description="Disordered" evidence="2">
    <location>
        <begin position="131"/>
        <end position="171"/>
    </location>
</feature>
<feature type="region of interest" description="RNA-binding" evidence="1">
    <location>
        <begin position="299"/>
        <end position="401"/>
    </location>
</feature>
<feature type="region of interest" description="Disordered" evidence="2">
    <location>
        <begin position="350"/>
        <end position="425"/>
    </location>
</feature>
<feature type="compositionally biased region" description="Polar residues" evidence="2">
    <location>
        <begin position="1"/>
        <end position="23"/>
    </location>
</feature>
<feature type="compositionally biased region" description="Polar residues" evidence="2">
    <location>
        <begin position="48"/>
        <end position="60"/>
    </location>
</feature>
<feature type="compositionally biased region" description="Polar residues" evidence="2">
    <location>
        <begin position="71"/>
        <end position="86"/>
    </location>
</feature>
<feature type="compositionally biased region" description="Polar residues" evidence="2">
    <location>
        <begin position="131"/>
        <end position="152"/>
    </location>
</feature>
<feature type="compositionally biased region" description="Low complexity" evidence="2">
    <location>
        <begin position="153"/>
        <end position="165"/>
    </location>
</feature>
<feature type="compositionally biased region" description="Basic and acidic residues" evidence="2">
    <location>
        <begin position="363"/>
        <end position="372"/>
    </location>
</feature>
<feature type="compositionally biased region" description="Polar residues" evidence="2">
    <location>
        <begin position="373"/>
        <end position="412"/>
    </location>
</feature>
<feature type="site" description="Cleavage; by Ty1 protease" evidence="1">
    <location>
        <begin position="401"/>
        <end position="402"/>
    </location>
</feature>
<sequence>MESQQLSQHSPISHGSACASVTSKEVHTNQDPLDVSASKIQEYDKASTKANSQQTTTPASSAVPENPHHASPQTAQSHSPQNGPYQQQCMMTQNQANPSGWSFYGRPSMIPYTPYQMSPMYFPPGPHSQFPQYPSSVGTPLSTPSPESGNTFTDSSSADSDMTSTKKYVRPPPMLTSPNDFLNWVKTYIKFLQNSNLGDIIPTATRKAVRQMTDDELTFLCHTFQLFAPSQFLPTWVKDILSADYTDIMKILSKSINKMQSDTQEVNDITTLATLHYNGSTPADAFEAEVTNILDRLNNNGIPINNKVACQFIMRGLSGEYKFLRYARHRYIHMTVADLFSDIHSMYEEQQESKRNKSTYRRNPSDEKKDSRTYTNTTKPKSITRNSQKPNNSQSRTARAHNVSTSNNSSGPDNDLIRGSTTEPIQLKNKHDLHLRPGTY</sequence>
<name>YN11A_YEAST</name>
<organism>
    <name type="scientific">Saccharomyces cerevisiae (strain ATCC 204508 / S288c)</name>
    <name type="common">Baker's yeast</name>
    <dbReference type="NCBI Taxonomy" id="559292"/>
    <lineage>
        <taxon>Eukaryota</taxon>
        <taxon>Fungi</taxon>
        <taxon>Dikarya</taxon>
        <taxon>Ascomycota</taxon>
        <taxon>Saccharomycotina</taxon>
        <taxon>Saccharomycetes</taxon>
        <taxon>Saccharomycetales</taxon>
        <taxon>Saccharomycetaceae</taxon>
        <taxon>Saccharomyces</taxon>
    </lineage>
</organism>
<gene>
    <name type="primary">TY1A-NL1</name>
    <name type="synonym">YNLCTy1-1 GAG</name>
    <name type="ordered locus">YNL284C-A</name>
    <name type="ORF">N0569</name>
</gene>
<protein>
    <recommendedName>
        <fullName>Transposon Ty1-NL1 Gag polyprotein</fullName>
    </recommendedName>
    <alternativeName>
        <fullName>Gag-p49</fullName>
    </alternativeName>
    <alternativeName>
        <fullName>Transposon Ty1 protein A</fullName>
        <shortName>TY1A</shortName>
        <shortName>TYA</shortName>
    </alternativeName>
    <alternativeName>
        <fullName>p58</fullName>
    </alternativeName>
    <component>
        <recommendedName>
            <fullName>Capsid protein</fullName>
            <shortName>CA</shortName>
        </recommendedName>
        <alternativeName>
            <fullName>Gag-p45</fullName>
        </alternativeName>
        <alternativeName>
            <fullName>p54</fullName>
        </alternativeName>
    </component>
    <component>
        <recommendedName>
            <fullName>Gag-p4</fullName>
        </recommendedName>
    </component>
</protein>